<gene>
    <name evidence="1" type="primary">atpD</name>
    <name evidence="1" type="synonym">atpB</name>
</gene>
<feature type="chain" id="PRO_0000144460" description="ATP synthase subunit beta">
    <location>
        <begin position="1"/>
        <end position="483"/>
    </location>
</feature>
<feature type="binding site" evidence="1">
    <location>
        <begin position="162"/>
        <end position="169"/>
    </location>
    <ligand>
        <name>ATP</name>
        <dbReference type="ChEBI" id="CHEBI:30616"/>
    </ligand>
</feature>
<reference key="1">
    <citation type="journal article" date="1992" name="Proc. Natl. Acad. Sci. U.S.A.">
        <title>Sequence of Prochloron didemni atpBE and the inference of chloroplast origins.</title>
        <authorList>
            <person name="Lockhart P.J."/>
            <person name="Beanland T.J."/>
            <person name="Howe C.J."/>
            <person name="Larkum A.W."/>
        </authorList>
    </citation>
    <scope>NUCLEOTIDE SEQUENCE [GENOMIC DNA]</scope>
</reference>
<name>ATPB_PRODI</name>
<accession>P50003</accession>
<organism>
    <name type="scientific">Prochloron didemni</name>
    <dbReference type="NCBI Taxonomy" id="1216"/>
    <lineage>
        <taxon>Bacteria</taxon>
        <taxon>Bacillati</taxon>
        <taxon>Cyanobacteriota</taxon>
        <taxon>Cyanophyceae</taxon>
        <taxon>Synechococcales</taxon>
        <taxon>Prochloraceae</taxon>
        <taxon>Prochloron</taxon>
    </lineage>
</organism>
<comment type="function">
    <text evidence="1">Produces ATP from ADP in the presence of a proton gradient across the membrane. The catalytic sites are hosted primarily by the beta subunits.</text>
</comment>
<comment type="catalytic activity">
    <reaction evidence="1">
        <text>ATP + H2O + 4 H(+)(in) = ADP + phosphate + 5 H(+)(out)</text>
        <dbReference type="Rhea" id="RHEA:57720"/>
        <dbReference type="ChEBI" id="CHEBI:15377"/>
        <dbReference type="ChEBI" id="CHEBI:15378"/>
        <dbReference type="ChEBI" id="CHEBI:30616"/>
        <dbReference type="ChEBI" id="CHEBI:43474"/>
        <dbReference type="ChEBI" id="CHEBI:456216"/>
        <dbReference type="EC" id="7.1.2.2"/>
    </reaction>
</comment>
<comment type="subunit">
    <text evidence="1">F-type ATPases have 2 components, CF(1) - the catalytic core - and CF(0) - the membrane proton channel. CF(1) has five subunits: alpha(3), beta(3), gamma(1), delta(1), epsilon(1). CF(0) has four main subunits: a(1), b(1), b'(1) and c(9-12).</text>
</comment>
<comment type="subcellular location">
    <subcellularLocation>
        <location evidence="1">Cellular thylakoid membrane</location>
        <topology evidence="1">Peripheral membrane protein</topology>
    </subcellularLocation>
</comment>
<comment type="similarity">
    <text evidence="1">Belongs to the ATPase alpha/beta chains family.</text>
</comment>
<keyword id="KW-0066">ATP synthesis</keyword>
<keyword id="KW-0067">ATP-binding</keyword>
<keyword id="KW-0139">CF(1)</keyword>
<keyword id="KW-0375">Hydrogen ion transport</keyword>
<keyword id="KW-0406">Ion transport</keyword>
<keyword id="KW-0472">Membrane</keyword>
<keyword id="KW-0547">Nucleotide-binding</keyword>
<keyword id="KW-0793">Thylakoid</keyword>
<keyword id="KW-1278">Translocase</keyword>
<keyword id="KW-0813">Transport</keyword>
<proteinExistence type="inferred from homology"/>
<evidence type="ECO:0000255" key="1">
    <source>
        <dbReference type="HAMAP-Rule" id="MF_01347"/>
    </source>
</evidence>
<protein>
    <recommendedName>
        <fullName evidence="1">ATP synthase subunit beta</fullName>
        <ecNumber evidence="1">7.1.2.2</ecNumber>
    </recommendedName>
    <alternativeName>
        <fullName evidence="1">ATP synthase F1 sector subunit beta</fullName>
    </alternativeName>
    <alternativeName>
        <fullName evidence="1">F-ATPase subunit beta</fullName>
    </alternativeName>
</protein>
<sequence>MVATTETTNIGKITQIIGPVVDAEFPSGKMPRIYNALRVEGKNAAGQDVAVTCEVQQLLGDNQVRAVSMSSTDGLVRGMEITDTGAPINVPVGKATLGRIFNILGEPVDNQGPVYTAETSPIHRAAPKFTDLDTKPTVFETGIKVIDLLTPYRRGGKIGLFGGAGVGKTVIMMELINNIAINHGGVSVFGGVGERTREGNDLYNEMIESKVINADNLNESKIALVYGQMNEPPGARMRVGLSALTMAEYFRDVNKQDVLLFIDNIFRFVQAGSEVSALLGRMPSAVGYQPTLGTDVGDLQERITSTKEGSITSIQAVYVPADDLTDPAPATTFAHLDGTTVLSRGLASKGIYPAVDPLDSTSTMLQAGIVGEDHYNTARAVQSTLQRYKELQDIIAILGLDELSEEDRLIVDRARKVERFLSQPFFVAEVFTGAPGKYVSLEDTIKGFKMILSGELDDLPEQAFYLVGDIQEAKAKAEKLKQD</sequence>
<dbReference type="EC" id="7.1.2.2" evidence="1"/>
<dbReference type="EMBL" id="M86384">
    <property type="protein sequence ID" value="AAA25556.1"/>
    <property type="molecule type" value="Genomic_DNA"/>
</dbReference>
<dbReference type="PIR" id="A42697">
    <property type="entry name" value="A42697"/>
</dbReference>
<dbReference type="SMR" id="P50003"/>
<dbReference type="GO" id="GO:0031676">
    <property type="term" value="C:plasma membrane-derived thylakoid membrane"/>
    <property type="evidence" value="ECO:0007669"/>
    <property type="project" value="UniProtKB-SubCell"/>
</dbReference>
<dbReference type="GO" id="GO:0045259">
    <property type="term" value="C:proton-transporting ATP synthase complex"/>
    <property type="evidence" value="ECO:0007669"/>
    <property type="project" value="UniProtKB-KW"/>
</dbReference>
<dbReference type="GO" id="GO:0005524">
    <property type="term" value="F:ATP binding"/>
    <property type="evidence" value="ECO:0007669"/>
    <property type="project" value="UniProtKB-UniRule"/>
</dbReference>
<dbReference type="GO" id="GO:0016887">
    <property type="term" value="F:ATP hydrolysis activity"/>
    <property type="evidence" value="ECO:0007669"/>
    <property type="project" value="InterPro"/>
</dbReference>
<dbReference type="GO" id="GO:0046933">
    <property type="term" value="F:proton-transporting ATP synthase activity, rotational mechanism"/>
    <property type="evidence" value="ECO:0007669"/>
    <property type="project" value="UniProtKB-UniRule"/>
</dbReference>
<dbReference type="CDD" id="cd18110">
    <property type="entry name" value="ATP-synt_F1_beta_C"/>
    <property type="match status" value="1"/>
</dbReference>
<dbReference type="CDD" id="cd18115">
    <property type="entry name" value="ATP-synt_F1_beta_N"/>
    <property type="match status" value="1"/>
</dbReference>
<dbReference type="CDD" id="cd01133">
    <property type="entry name" value="F1-ATPase_beta_CD"/>
    <property type="match status" value="1"/>
</dbReference>
<dbReference type="FunFam" id="1.10.1140.10:FF:000001">
    <property type="entry name" value="ATP synthase subunit beta"/>
    <property type="match status" value="1"/>
</dbReference>
<dbReference type="FunFam" id="3.40.50.12240:FF:000006">
    <property type="entry name" value="ATP synthase subunit beta"/>
    <property type="match status" value="1"/>
</dbReference>
<dbReference type="FunFam" id="3.40.50.300:FF:000004">
    <property type="entry name" value="ATP synthase subunit beta"/>
    <property type="match status" value="1"/>
</dbReference>
<dbReference type="FunFam" id="2.40.10.170:FF:000002">
    <property type="entry name" value="ATP synthase subunit beta, chloroplastic"/>
    <property type="match status" value="1"/>
</dbReference>
<dbReference type="Gene3D" id="2.40.10.170">
    <property type="match status" value="1"/>
</dbReference>
<dbReference type="Gene3D" id="1.10.1140.10">
    <property type="entry name" value="Bovine Mitochondrial F1-atpase, Atp Synthase Beta Chain, Chain D, domain 3"/>
    <property type="match status" value="1"/>
</dbReference>
<dbReference type="Gene3D" id="3.40.50.300">
    <property type="entry name" value="P-loop containing nucleotide triphosphate hydrolases"/>
    <property type="match status" value="1"/>
</dbReference>
<dbReference type="HAMAP" id="MF_01347">
    <property type="entry name" value="ATP_synth_beta_bact"/>
    <property type="match status" value="1"/>
</dbReference>
<dbReference type="InterPro" id="IPR003593">
    <property type="entry name" value="AAA+_ATPase"/>
</dbReference>
<dbReference type="InterPro" id="IPR055190">
    <property type="entry name" value="ATP-synt_VA_C"/>
</dbReference>
<dbReference type="InterPro" id="IPR005722">
    <property type="entry name" value="ATP_synth_F1_bsu"/>
</dbReference>
<dbReference type="InterPro" id="IPR020003">
    <property type="entry name" value="ATPase_a/bsu_AS"/>
</dbReference>
<dbReference type="InterPro" id="IPR050053">
    <property type="entry name" value="ATPase_alpha/beta_chains"/>
</dbReference>
<dbReference type="InterPro" id="IPR004100">
    <property type="entry name" value="ATPase_F1/V1/A1_a/bsu_N"/>
</dbReference>
<dbReference type="InterPro" id="IPR036121">
    <property type="entry name" value="ATPase_F1/V1/A1_a/bsu_N_sf"/>
</dbReference>
<dbReference type="InterPro" id="IPR000194">
    <property type="entry name" value="ATPase_F1/V1/A1_a/bsu_nucl-bd"/>
</dbReference>
<dbReference type="InterPro" id="IPR024034">
    <property type="entry name" value="ATPase_F1/V1_b/a_C"/>
</dbReference>
<dbReference type="InterPro" id="IPR027417">
    <property type="entry name" value="P-loop_NTPase"/>
</dbReference>
<dbReference type="NCBIfam" id="TIGR01039">
    <property type="entry name" value="atpD"/>
    <property type="match status" value="1"/>
</dbReference>
<dbReference type="PANTHER" id="PTHR15184">
    <property type="entry name" value="ATP SYNTHASE"/>
    <property type="match status" value="1"/>
</dbReference>
<dbReference type="PANTHER" id="PTHR15184:SF71">
    <property type="entry name" value="ATP SYNTHASE SUBUNIT BETA, MITOCHONDRIAL"/>
    <property type="match status" value="1"/>
</dbReference>
<dbReference type="Pfam" id="PF00006">
    <property type="entry name" value="ATP-synt_ab"/>
    <property type="match status" value="1"/>
</dbReference>
<dbReference type="Pfam" id="PF02874">
    <property type="entry name" value="ATP-synt_ab_N"/>
    <property type="match status" value="1"/>
</dbReference>
<dbReference type="Pfam" id="PF22919">
    <property type="entry name" value="ATP-synt_VA_C"/>
    <property type="match status" value="1"/>
</dbReference>
<dbReference type="SMART" id="SM00382">
    <property type="entry name" value="AAA"/>
    <property type="match status" value="1"/>
</dbReference>
<dbReference type="SUPFAM" id="SSF47917">
    <property type="entry name" value="C-terminal domain of alpha and beta subunits of F1 ATP synthase"/>
    <property type="match status" value="1"/>
</dbReference>
<dbReference type="SUPFAM" id="SSF50615">
    <property type="entry name" value="N-terminal domain of alpha and beta subunits of F1 ATP synthase"/>
    <property type="match status" value="1"/>
</dbReference>
<dbReference type="SUPFAM" id="SSF52540">
    <property type="entry name" value="P-loop containing nucleoside triphosphate hydrolases"/>
    <property type="match status" value="1"/>
</dbReference>
<dbReference type="PROSITE" id="PS00152">
    <property type="entry name" value="ATPASE_ALPHA_BETA"/>
    <property type="match status" value="1"/>
</dbReference>